<keyword id="KW-0963">Cytoplasm</keyword>
<keyword id="KW-0444">Lipid biosynthesis</keyword>
<keyword id="KW-0443">Lipid metabolism</keyword>
<keyword id="KW-0594">Phospholipid biosynthesis</keyword>
<keyword id="KW-1208">Phospholipid metabolism</keyword>
<keyword id="KW-0808">Transferase</keyword>
<dbReference type="EC" id="2.3.1.274" evidence="1"/>
<dbReference type="EMBL" id="CP000107">
    <property type="protein sequence ID" value="AAZ68609.1"/>
    <property type="molecule type" value="Genomic_DNA"/>
</dbReference>
<dbReference type="RefSeq" id="WP_011304687.1">
    <property type="nucleotide sequence ID" value="NC_007354.1"/>
</dbReference>
<dbReference type="SMR" id="Q3YRP6"/>
<dbReference type="FunCoup" id="Q3YRP6">
    <property type="interactions" value="165"/>
</dbReference>
<dbReference type="STRING" id="269484.Ecaj_0575"/>
<dbReference type="KEGG" id="ecn:Ecaj_0575"/>
<dbReference type="eggNOG" id="COG0416">
    <property type="taxonomic scope" value="Bacteria"/>
</dbReference>
<dbReference type="HOGENOM" id="CLU_039379_1_0_5"/>
<dbReference type="InParanoid" id="Q3YRP6"/>
<dbReference type="UniPathway" id="UPA00085"/>
<dbReference type="Proteomes" id="UP000000435">
    <property type="component" value="Chromosome"/>
</dbReference>
<dbReference type="GO" id="GO:0005737">
    <property type="term" value="C:cytoplasm"/>
    <property type="evidence" value="ECO:0007669"/>
    <property type="project" value="UniProtKB-SubCell"/>
</dbReference>
<dbReference type="GO" id="GO:0043811">
    <property type="term" value="F:phosphate:acyl-[acyl carrier protein] acyltransferase activity"/>
    <property type="evidence" value="ECO:0007669"/>
    <property type="project" value="UniProtKB-UniRule"/>
</dbReference>
<dbReference type="GO" id="GO:0006633">
    <property type="term" value="P:fatty acid biosynthetic process"/>
    <property type="evidence" value="ECO:0007669"/>
    <property type="project" value="UniProtKB-UniRule"/>
</dbReference>
<dbReference type="GO" id="GO:0008654">
    <property type="term" value="P:phospholipid biosynthetic process"/>
    <property type="evidence" value="ECO:0007669"/>
    <property type="project" value="UniProtKB-KW"/>
</dbReference>
<dbReference type="Gene3D" id="3.40.718.10">
    <property type="entry name" value="Isopropylmalate Dehydrogenase"/>
    <property type="match status" value="1"/>
</dbReference>
<dbReference type="HAMAP" id="MF_00019">
    <property type="entry name" value="PlsX"/>
    <property type="match status" value="1"/>
</dbReference>
<dbReference type="InterPro" id="IPR003664">
    <property type="entry name" value="FA_synthesis"/>
</dbReference>
<dbReference type="InterPro" id="IPR012281">
    <property type="entry name" value="Phospholipid_synth_PlsX-like"/>
</dbReference>
<dbReference type="NCBIfam" id="TIGR00182">
    <property type="entry name" value="plsX"/>
    <property type="match status" value="1"/>
</dbReference>
<dbReference type="PANTHER" id="PTHR30100">
    <property type="entry name" value="FATTY ACID/PHOSPHOLIPID SYNTHESIS PROTEIN PLSX"/>
    <property type="match status" value="1"/>
</dbReference>
<dbReference type="PANTHER" id="PTHR30100:SF1">
    <property type="entry name" value="PHOSPHATE ACYLTRANSFERASE"/>
    <property type="match status" value="1"/>
</dbReference>
<dbReference type="Pfam" id="PF02504">
    <property type="entry name" value="FA_synthesis"/>
    <property type="match status" value="1"/>
</dbReference>
<dbReference type="PIRSF" id="PIRSF002465">
    <property type="entry name" value="Phsphlp_syn_PlsX"/>
    <property type="match status" value="1"/>
</dbReference>
<dbReference type="SUPFAM" id="SSF53659">
    <property type="entry name" value="Isocitrate/Isopropylmalate dehydrogenase-like"/>
    <property type="match status" value="1"/>
</dbReference>
<proteinExistence type="inferred from homology"/>
<protein>
    <recommendedName>
        <fullName evidence="1">Phosphate acyltransferase</fullName>
        <ecNumber evidence="1">2.3.1.274</ecNumber>
    </recommendedName>
    <alternativeName>
        <fullName evidence="1">Acyl-ACP phosphotransacylase</fullName>
    </alternativeName>
    <alternativeName>
        <fullName evidence="1">Acyl-[acyl-carrier-protein]--phosphate acyltransferase</fullName>
    </alternativeName>
    <alternativeName>
        <fullName evidence="1">Phosphate-acyl-ACP acyltransferase</fullName>
    </alternativeName>
</protein>
<comment type="function">
    <text evidence="1">Catalyzes the reversible formation of acyl-phosphate (acyl-PO(4)) from acyl-[acyl-carrier-protein] (acyl-ACP). This enzyme utilizes acyl-ACP as fatty acyl donor, but not acyl-CoA.</text>
</comment>
<comment type="catalytic activity">
    <reaction evidence="1">
        <text>a fatty acyl-[ACP] + phosphate = an acyl phosphate + holo-[ACP]</text>
        <dbReference type="Rhea" id="RHEA:42292"/>
        <dbReference type="Rhea" id="RHEA-COMP:9685"/>
        <dbReference type="Rhea" id="RHEA-COMP:14125"/>
        <dbReference type="ChEBI" id="CHEBI:43474"/>
        <dbReference type="ChEBI" id="CHEBI:59918"/>
        <dbReference type="ChEBI" id="CHEBI:64479"/>
        <dbReference type="ChEBI" id="CHEBI:138651"/>
        <dbReference type="EC" id="2.3.1.274"/>
    </reaction>
</comment>
<comment type="pathway">
    <text evidence="1">Lipid metabolism; phospholipid metabolism.</text>
</comment>
<comment type="subunit">
    <text evidence="1">Homodimer. Probably interacts with PlsY.</text>
</comment>
<comment type="subcellular location">
    <subcellularLocation>
        <location evidence="1">Cytoplasm</location>
    </subcellularLocation>
    <text evidence="1">Associated with the membrane possibly through PlsY.</text>
</comment>
<comment type="similarity">
    <text evidence="1">Belongs to the PlsX family.</text>
</comment>
<feature type="chain" id="PRO_1000001757" description="Phosphate acyltransferase">
    <location>
        <begin position="1"/>
        <end position="337"/>
    </location>
</feature>
<reference key="1">
    <citation type="journal article" date="2006" name="J. Bacteriol.">
        <title>The genome of the obligately intracellular bacterium Ehrlichia canis reveals themes of complex membrane structure and immune evasion strategies.</title>
        <authorList>
            <person name="Mavromatis K."/>
            <person name="Doyle C.K."/>
            <person name="Lykidis A."/>
            <person name="Ivanova N."/>
            <person name="Francino M.P."/>
            <person name="Chain P."/>
            <person name="Shin M."/>
            <person name="Malfatti S."/>
            <person name="Larimer F."/>
            <person name="Copeland A."/>
            <person name="Detter J.C."/>
            <person name="Land M."/>
            <person name="Richardson P.M."/>
            <person name="Yu X.J."/>
            <person name="Walker D.H."/>
            <person name="McBride J.W."/>
            <person name="Kyrpides N.C."/>
        </authorList>
    </citation>
    <scope>NUCLEOTIDE SEQUENCE [LARGE SCALE GENOMIC DNA]</scope>
    <source>
        <strain>Jake</strain>
    </source>
</reference>
<sequence length="337" mass="36105">MSIISIAVDAMGGDFAPEAVIGGLDFALTNLLDNKDVSFNIYGQESQVLPMLDKYKNVKEHSLFIDTPDIVLANDKPSFALRKRKSSSMWCAIESIKNGVTSGVVSSGNTGALMAISCFVLGTLPNIKRPAICCALPSKCERYFVILDLGANVDCSANSLFQFAIMGNAFAKAVLNVPNPKVALLNVGEEEVKGTDVIREAFLLLRQAESSINFCGYIEPINMLGGEVDVVVADGFCGNVVLKVAESIAYIFKSVFEKSVSSSIITKIAGLLLKSSMKRNFMKFNPKIYNGAMLVGLNGVVVKSHGNADKIAFAHAVKVAVNAARNNINAKIIHELG</sequence>
<name>PLSX_EHRCJ</name>
<organism>
    <name type="scientific">Ehrlichia canis (strain Jake)</name>
    <dbReference type="NCBI Taxonomy" id="269484"/>
    <lineage>
        <taxon>Bacteria</taxon>
        <taxon>Pseudomonadati</taxon>
        <taxon>Pseudomonadota</taxon>
        <taxon>Alphaproteobacteria</taxon>
        <taxon>Rickettsiales</taxon>
        <taxon>Anaplasmataceae</taxon>
        <taxon>Ehrlichia</taxon>
    </lineage>
</organism>
<gene>
    <name evidence="1" type="primary">plsX</name>
    <name type="ordered locus">Ecaj_0575</name>
</gene>
<accession>Q3YRP6</accession>
<evidence type="ECO:0000255" key="1">
    <source>
        <dbReference type="HAMAP-Rule" id="MF_00019"/>
    </source>
</evidence>